<feature type="signal peptide" evidence="2">
    <location>
        <begin position="1"/>
        <end position="20"/>
    </location>
</feature>
<feature type="chain" id="PRO_5001705254" description="Immunoglobulin lambda variable 3-22" evidence="2">
    <location>
        <begin position="21"/>
        <end position="115"/>
    </location>
</feature>
<feature type="domain" description="Ig-like" evidence="3">
    <location>
        <begin position="21"/>
        <end position="115" status="greater than"/>
    </location>
</feature>
<feature type="region of interest" description="Framework-1" evidence="1">
    <location>
        <begin position="20"/>
        <end position="41"/>
    </location>
</feature>
<feature type="region of interest" description="Complementarity-determining-1" evidence="1">
    <location>
        <begin position="42"/>
        <end position="50"/>
    </location>
</feature>
<feature type="region of interest" description="Framework-2" evidence="1">
    <location>
        <begin position="51"/>
        <end position="67"/>
    </location>
</feature>
<feature type="region of interest" description="Complementarity-determining-2" evidence="1">
    <location>
        <begin position="68"/>
        <end position="70"/>
    </location>
</feature>
<feature type="region of interest" description="Framework-3" evidence="1">
    <location>
        <begin position="71"/>
        <end position="106"/>
    </location>
</feature>
<feature type="region of interest" description="Complementarity-determining-3" evidence="1">
    <location>
        <begin position="107"/>
        <end position="115" status="greater than"/>
    </location>
</feature>
<feature type="glycosylation site" description="N-linked (GlcNAc...) asparagine" evidence="2">
    <location>
        <position position="87"/>
    </location>
</feature>
<feature type="disulfide bond" evidence="3">
    <location>
        <begin position="41"/>
        <end position="106"/>
    </location>
</feature>
<feature type="non-terminal residue">
    <location>
        <position position="115"/>
    </location>
</feature>
<dbReference type="EMBL" id="AC244250">
    <property type="status" value="NOT_ANNOTATED_CDS"/>
    <property type="molecule type" value="Genomic_DNA"/>
</dbReference>
<dbReference type="SMR" id="A0A075B6J6"/>
<dbReference type="FunCoup" id="A0A075B6J6">
    <property type="interactions" value="317"/>
</dbReference>
<dbReference type="IMGT_GENE-DB" id="IGLV3-22"/>
<dbReference type="GlyCosmos" id="A0A075B6J6">
    <property type="glycosylation" value="1 site, No reported glycans"/>
</dbReference>
<dbReference type="GlyGen" id="A0A075B6J6">
    <property type="glycosylation" value="1 site"/>
</dbReference>
<dbReference type="BioMuta" id="IGLV3-22"/>
<dbReference type="MassIVE" id="A0A075B6J6"/>
<dbReference type="Ensembl" id="ENST00000390307.2">
    <property type="protein sequence ID" value="ENSP00000374842.2"/>
    <property type="gene ID" value="ENSG00000211661.2"/>
</dbReference>
<dbReference type="UCSC" id="uc062ccv.1">
    <property type="organism name" value="human"/>
</dbReference>
<dbReference type="AGR" id="HGNC:5906"/>
<dbReference type="GeneCards" id="IGLV3-22"/>
<dbReference type="HGNC" id="HGNC:5906">
    <property type="gene designation" value="IGLV3-22"/>
</dbReference>
<dbReference type="HPA" id="ENSG00000211661">
    <property type="expression patterns" value="Tissue enhanced (breast, lymphoid tissue)"/>
</dbReference>
<dbReference type="neXtProt" id="NX_A0A075B6J6"/>
<dbReference type="VEuPathDB" id="HostDB:ENSG00000211661"/>
<dbReference type="GeneTree" id="ENSGT00940000153120"/>
<dbReference type="HOGENOM" id="CLU_077975_4_0_1"/>
<dbReference type="InParanoid" id="A0A075B6J6"/>
<dbReference type="OMA" id="AYAYWYQ"/>
<dbReference type="PAN-GO" id="A0A075B6J6">
    <property type="GO annotations" value="3 GO annotations based on evolutionary models"/>
</dbReference>
<dbReference type="PhylomeDB" id="A0A075B6J6"/>
<dbReference type="SignaLink" id="A0A075B6J6"/>
<dbReference type="Pharos" id="A0A075B6J6">
    <property type="development level" value="Tdark"/>
</dbReference>
<dbReference type="PRO" id="PR:A0A075B6J6"/>
<dbReference type="Proteomes" id="UP000005640">
    <property type="component" value="Chromosome 22"/>
</dbReference>
<dbReference type="RNAct" id="A0A075B6J6">
    <property type="molecule type" value="protein"/>
</dbReference>
<dbReference type="Bgee" id="ENSG00000211661">
    <property type="expression patterns" value="Expressed in mucosa of transverse colon and 47 other cell types or tissues"/>
</dbReference>
<dbReference type="GO" id="GO:0005576">
    <property type="term" value="C:extracellular region"/>
    <property type="evidence" value="ECO:0007669"/>
    <property type="project" value="UniProtKB-SubCell"/>
</dbReference>
<dbReference type="GO" id="GO:0019814">
    <property type="term" value="C:immunoglobulin complex"/>
    <property type="evidence" value="ECO:0000318"/>
    <property type="project" value="GO_Central"/>
</dbReference>
<dbReference type="GO" id="GO:0005886">
    <property type="term" value="C:plasma membrane"/>
    <property type="evidence" value="ECO:0007669"/>
    <property type="project" value="UniProtKB-SubCell"/>
</dbReference>
<dbReference type="GO" id="GO:0002250">
    <property type="term" value="P:adaptive immune response"/>
    <property type="evidence" value="ECO:0007669"/>
    <property type="project" value="UniProtKB-KW"/>
</dbReference>
<dbReference type="GO" id="GO:0006955">
    <property type="term" value="P:immune response"/>
    <property type="evidence" value="ECO:0000318"/>
    <property type="project" value="GO_Central"/>
</dbReference>
<dbReference type="FunFam" id="2.60.40.10:FF:003014">
    <property type="entry name" value="Immunoglobulin lambda variable 3-22"/>
    <property type="match status" value="1"/>
</dbReference>
<dbReference type="Gene3D" id="2.60.40.10">
    <property type="entry name" value="Immunoglobulins"/>
    <property type="match status" value="1"/>
</dbReference>
<dbReference type="InterPro" id="IPR007110">
    <property type="entry name" value="Ig-like_dom"/>
</dbReference>
<dbReference type="InterPro" id="IPR036179">
    <property type="entry name" value="Ig-like_dom_sf"/>
</dbReference>
<dbReference type="InterPro" id="IPR013783">
    <property type="entry name" value="Ig-like_fold"/>
</dbReference>
<dbReference type="InterPro" id="IPR003599">
    <property type="entry name" value="Ig_sub"/>
</dbReference>
<dbReference type="InterPro" id="IPR013106">
    <property type="entry name" value="Ig_V-set"/>
</dbReference>
<dbReference type="InterPro" id="IPR050150">
    <property type="entry name" value="IgV_Light_Chain"/>
</dbReference>
<dbReference type="PANTHER" id="PTHR23267">
    <property type="entry name" value="IMMUNOGLOBULIN LIGHT CHAIN"/>
    <property type="match status" value="1"/>
</dbReference>
<dbReference type="Pfam" id="PF07686">
    <property type="entry name" value="V-set"/>
    <property type="match status" value="1"/>
</dbReference>
<dbReference type="SMART" id="SM00409">
    <property type="entry name" value="IG"/>
    <property type="match status" value="1"/>
</dbReference>
<dbReference type="SMART" id="SM00406">
    <property type="entry name" value="IGv"/>
    <property type="match status" value="1"/>
</dbReference>
<dbReference type="SUPFAM" id="SSF48726">
    <property type="entry name" value="Immunoglobulin"/>
    <property type="match status" value="1"/>
</dbReference>
<dbReference type="PROSITE" id="PS50835">
    <property type="entry name" value="IG_LIKE"/>
    <property type="match status" value="1"/>
</dbReference>
<proteinExistence type="evidence at protein level"/>
<organism>
    <name type="scientific">Homo sapiens</name>
    <name type="common">Human</name>
    <dbReference type="NCBI Taxonomy" id="9606"/>
    <lineage>
        <taxon>Eukaryota</taxon>
        <taxon>Metazoa</taxon>
        <taxon>Chordata</taxon>
        <taxon>Craniata</taxon>
        <taxon>Vertebrata</taxon>
        <taxon>Euteleostomi</taxon>
        <taxon>Mammalia</taxon>
        <taxon>Eutheria</taxon>
        <taxon>Euarchontoglires</taxon>
        <taxon>Primates</taxon>
        <taxon>Haplorrhini</taxon>
        <taxon>Catarrhini</taxon>
        <taxon>Hominidae</taxon>
        <taxon>Homo</taxon>
    </lineage>
</organism>
<accession>A0A075B6J6</accession>
<protein>
    <recommendedName>
        <fullName evidence="4 9">Immunoglobulin lambda variable 3-22</fullName>
    </recommendedName>
</protein>
<comment type="function">
    <text evidence="5 6 7 8">V region of the variable domain of immunoglobulin light chains that participates in the antigen recognition (PubMed:24600447). Immunoglobulins, also known as antibodies, are membrane-bound or secreted glycoproteins produced by B lymphocytes. In the recognition phase of humoral immunity, the membrane-bound immunoglobulins serve as receptors which, upon binding of a specific antigen, trigger the clonal expansion and differentiation of B lymphocytes into immunoglobulins-secreting plasma cells. Secreted immunoglobulins mediate the effector phase of humoral immunity, which results in the elimination of bound antigens (PubMed:20176268, PubMed:22158414). The antigen binding site is formed by the variable domain of one heavy chain, together with that of its associated light chain. Thus, each immunoglobulin has two antigen binding sites with remarkable affinity for a particular antigen. The variable domains are assembled by a process called V-(D)-J rearrangement and can then be subjected to somatic hypermutations which, after exposure to antigen and selection, allow affinity maturation for a particular antigen (PubMed:17576170, PubMed:20176268).</text>
</comment>
<comment type="subunit">
    <text evidence="6">Immunoglobulins are composed of two identical heavy chains and two identical light chains; disulfide-linked.</text>
</comment>
<comment type="subcellular location">
    <subcellularLocation>
        <location evidence="6 7">Secreted</location>
    </subcellularLocation>
    <subcellularLocation>
        <location evidence="6 7">Cell membrane</location>
    </subcellularLocation>
</comment>
<comment type="polymorphism">
    <text>There are several alleles. The sequence shown is that of IMGT allele IGLV3-22*01.</text>
</comment>
<comment type="caution">
    <text evidence="10">For an example of a full-length immunoglobulin lambda light chain see AC P0DOX8.</text>
</comment>
<keyword id="KW-1064">Adaptive immunity</keyword>
<keyword id="KW-1003">Cell membrane</keyword>
<keyword id="KW-1015">Disulfide bond</keyword>
<keyword id="KW-0325">Glycoprotein</keyword>
<keyword id="KW-0391">Immunity</keyword>
<keyword id="KW-1280">Immunoglobulin</keyword>
<keyword id="KW-0393">Immunoglobulin domain</keyword>
<keyword id="KW-0472">Membrane</keyword>
<keyword id="KW-1267">Proteomics identification</keyword>
<keyword id="KW-1185">Reference proteome</keyword>
<keyword id="KW-0964">Secreted</keyword>
<keyword id="KW-0732">Signal</keyword>
<evidence type="ECO:0000250" key="1">
    <source>
        <dbReference type="UniProtKB" id="P01721"/>
    </source>
</evidence>
<evidence type="ECO:0000255" key="2"/>
<evidence type="ECO:0000255" key="3">
    <source>
        <dbReference type="PROSITE-ProRule" id="PRU00114"/>
    </source>
</evidence>
<evidence type="ECO:0000303" key="4">
    <source>
    </source>
</evidence>
<evidence type="ECO:0000303" key="5">
    <source>
    </source>
</evidence>
<evidence type="ECO:0000303" key="6">
    <source>
    </source>
</evidence>
<evidence type="ECO:0000303" key="7">
    <source>
    </source>
</evidence>
<evidence type="ECO:0000303" key="8">
    <source>
    </source>
</evidence>
<evidence type="ECO:0000303" key="9">
    <source ref="3"/>
</evidence>
<evidence type="ECO:0000305" key="10"/>
<reference key="1">
    <citation type="journal article" date="1999" name="Nature">
        <title>The DNA sequence of human chromosome 22.</title>
        <authorList>
            <person name="Dunham I."/>
            <person name="Hunt A.R."/>
            <person name="Collins J.E."/>
            <person name="Bruskiewich R."/>
            <person name="Beare D.M."/>
            <person name="Clamp M."/>
            <person name="Smink L.J."/>
            <person name="Ainscough R."/>
            <person name="Almeida J.P."/>
            <person name="Babbage A.K."/>
            <person name="Bagguley C."/>
            <person name="Bailey J."/>
            <person name="Barlow K.F."/>
            <person name="Bates K.N."/>
            <person name="Beasley O.P."/>
            <person name="Bird C.P."/>
            <person name="Blakey S.E."/>
            <person name="Bridgeman A.M."/>
            <person name="Buck D."/>
            <person name="Burgess J."/>
            <person name="Burrill W.D."/>
            <person name="Burton J."/>
            <person name="Carder C."/>
            <person name="Carter N.P."/>
            <person name="Chen Y."/>
            <person name="Clark G."/>
            <person name="Clegg S.M."/>
            <person name="Cobley V.E."/>
            <person name="Cole C.G."/>
            <person name="Collier R.E."/>
            <person name="Connor R."/>
            <person name="Conroy D."/>
            <person name="Corby N.R."/>
            <person name="Coville G.J."/>
            <person name="Cox A.V."/>
            <person name="Davis J."/>
            <person name="Dawson E."/>
            <person name="Dhami P.D."/>
            <person name="Dockree C."/>
            <person name="Dodsworth S.J."/>
            <person name="Durbin R.M."/>
            <person name="Ellington A.G."/>
            <person name="Evans K.L."/>
            <person name="Fey J.M."/>
            <person name="Fleming K."/>
            <person name="French L."/>
            <person name="Garner A.A."/>
            <person name="Gilbert J.G.R."/>
            <person name="Goward M.E."/>
            <person name="Grafham D.V."/>
            <person name="Griffiths M.N.D."/>
            <person name="Hall C."/>
            <person name="Hall R.E."/>
            <person name="Hall-Tamlyn G."/>
            <person name="Heathcott R.W."/>
            <person name="Ho S."/>
            <person name="Holmes S."/>
            <person name="Hunt S.E."/>
            <person name="Jones M.C."/>
            <person name="Kershaw J."/>
            <person name="Kimberley A.M."/>
            <person name="King A."/>
            <person name="Laird G.K."/>
            <person name="Langford C.F."/>
            <person name="Leversha M.A."/>
            <person name="Lloyd C."/>
            <person name="Lloyd D.M."/>
            <person name="Martyn I.D."/>
            <person name="Mashreghi-Mohammadi M."/>
            <person name="Matthews L.H."/>
            <person name="Mccann O.T."/>
            <person name="Mcclay J."/>
            <person name="Mclaren S."/>
            <person name="McMurray A.A."/>
            <person name="Milne S.A."/>
            <person name="Mortimore B.J."/>
            <person name="Odell C.N."/>
            <person name="Pavitt R."/>
            <person name="Pearce A.V."/>
            <person name="Pearson D."/>
            <person name="Phillimore B.J.C.T."/>
            <person name="Phillips S.H."/>
            <person name="Plumb R.W."/>
            <person name="Ramsay H."/>
            <person name="Ramsey Y."/>
            <person name="Rogers L."/>
            <person name="Ross M.T."/>
            <person name="Scott C.E."/>
            <person name="Sehra H.K."/>
            <person name="Skuce C.D."/>
            <person name="Smalley S."/>
            <person name="Smith M.L."/>
            <person name="Soderlund C."/>
            <person name="Spragon L."/>
            <person name="Steward C.A."/>
            <person name="Sulston J.E."/>
            <person name="Swann R.M."/>
            <person name="Vaudin M."/>
            <person name="Wall M."/>
            <person name="Wallis J.M."/>
            <person name="Whiteley M.N."/>
            <person name="Willey D.L."/>
            <person name="Williams L."/>
            <person name="Williams S.A."/>
            <person name="Williamson H."/>
            <person name="Wilmer T.E."/>
            <person name="Wilming L."/>
            <person name="Wright C.L."/>
            <person name="Hubbard T."/>
            <person name="Bentley D.R."/>
            <person name="Beck S."/>
            <person name="Rogers J."/>
            <person name="Shimizu N."/>
            <person name="Minoshima S."/>
            <person name="Kawasaki K."/>
            <person name="Sasaki T."/>
            <person name="Asakawa S."/>
            <person name="Kudoh J."/>
            <person name="Shintani A."/>
            <person name="Shibuya K."/>
            <person name="Yoshizaki Y."/>
            <person name="Aoki N."/>
            <person name="Mitsuyama S."/>
            <person name="Roe B.A."/>
            <person name="Chen F."/>
            <person name="Chu L."/>
            <person name="Crabtree J."/>
            <person name="Deschamps S."/>
            <person name="Do A."/>
            <person name="Do T."/>
            <person name="Dorman A."/>
            <person name="Fang F."/>
            <person name="Fu Y."/>
            <person name="Hu P."/>
            <person name="Hua A."/>
            <person name="Kenton S."/>
            <person name="Lai H."/>
            <person name="Lao H.I."/>
            <person name="Lewis J."/>
            <person name="Lewis S."/>
            <person name="Lin S.-P."/>
            <person name="Loh P."/>
            <person name="Malaj E."/>
            <person name="Nguyen T."/>
            <person name="Pan H."/>
            <person name="Phan S."/>
            <person name="Qi S."/>
            <person name="Qian Y."/>
            <person name="Ray L."/>
            <person name="Ren Q."/>
            <person name="Shaull S."/>
            <person name="Sloan D."/>
            <person name="Song L."/>
            <person name="Wang Q."/>
            <person name="Wang Y."/>
            <person name="Wang Z."/>
            <person name="White J."/>
            <person name="Willingham D."/>
            <person name="Wu H."/>
            <person name="Yao Z."/>
            <person name="Zhan M."/>
            <person name="Zhang G."/>
            <person name="Chissoe S."/>
            <person name="Murray J."/>
            <person name="Miller N."/>
            <person name="Minx P."/>
            <person name="Fulton R."/>
            <person name="Johnson D."/>
            <person name="Bemis G."/>
            <person name="Bentley D."/>
            <person name="Bradshaw H."/>
            <person name="Bourne S."/>
            <person name="Cordes M."/>
            <person name="Du Z."/>
            <person name="Fulton L."/>
            <person name="Goela D."/>
            <person name="Graves T."/>
            <person name="Hawkins J."/>
            <person name="Hinds K."/>
            <person name="Kemp K."/>
            <person name="Latreille P."/>
            <person name="Layman D."/>
            <person name="Ozersky P."/>
            <person name="Rohlfing T."/>
            <person name="Scheet P."/>
            <person name="Walker C."/>
            <person name="Wamsley A."/>
            <person name="Wohldmann P."/>
            <person name="Pepin K."/>
            <person name="Nelson J."/>
            <person name="Korf I."/>
            <person name="Bedell J.A."/>
            <person name="Hillier L.W."/>
            <person name="Mardis E."/>
            <person name="Waterston R."/>
            <person name="Wilson R."/>
            <person name="Emanuel B.S."/>
            <person name="Shaikh T."/>
            <person name="Kurahashi H."/>
            <person name="Saitta S."/>
            <person name="Budarf M.L."/>
            <person name="McDermid H.E."/>
            <person name="Johnson A."/>
            <person name="Wong A.C.C."/>
            <person name="Morrow B.E."/>
            <person name="Edelmann L."/>
            <person name="Kim U.J."/>
            <person name="Shizuya H."/>
            <person name="Simon M.I."/>
            <person name="Dumanski J.P."/>
            <person name="Peyrard M."/>
            <person name="Kedra D."/>
            <person name="Seroussi E."/>
            <person name="Fransson I."/>
            <person name="Tapia I."/>
            <person name="Bruder C.E."/>
            <person name="O'Brien K.P."/>
            <person name="Wilkinson P."/>
            <person name="Bodenteich A."/>
            <person name="Hartman K."/>
            <person name="Hu X."/>
            <person name="Khan A.S."/>
            <person name="Lane L."/>
            <person name="Tilahun Y."/>
            <person name="Wright H."/>
        </authorList>
    </citation>
    <scope>NUCLEOTIDE SEQUENCE [LARGE SCALE GENOMIC DNA] (IMGT ALLELE IGLV3-22*01)</scope>
</reference>
<reference key="2">
    <citation type="journal article" date="2001" name="Exp. Clin. Immunogenet.">
        <title>Nomenclature of the human immunoglobulin lambda (IGL) genes.</title>
        <authorList>
            <person name="Lefranc M.P."/>
        </authorList>
    </citation>
    <scope>NOMENCLATURE</scope>
</reference>
<reference key="3">
    <citation type="book" date="2001" name="The Immunoglobulin FactsBook.">
        <title>The Immunoglobulin FactsBook.</title>
        <editorList>
            <person name="Lefranc M.P."/>
            <person name="Lefranc G."/>
        </editorList>
        <authorList>
            <person name="Lefranc M.P."/>
            <person name="Lefranc G."/>
        </authorList>
    </citation>
    <scope>NOMENCLATURE</scope>
</reference>
<reference key="4">
    <citation type="journal article" date="2007" name="Annu. Rev. Genet.">
        <title>Immunoglobulin somatic hypermutation.</title>
        <authorList>
            <person name="Teng G."/>
            <person name="Papavasiliou F.N."/>
        </authorList>
    </citation>
    <scope>REVIEW ON SOMATIC HYPERMUTATION</scope>
</reference>
<reference key="5">
    <citation type="journal article" date="2010" name="J. Allergy Clin. Immunol.">
        <title>Structure and function of immunoglobulins.</title>
        <authorList>
            <person name="Schroeder H.W. Jr."/>
            <person name="Cavacini L."/>
        </authorList>
    </citation>
    <scope>REVIEW ON IMMUNOGLOBULINS</scope>
</reference>
<reference key="6">
    <citation type="journal article" date="2012" name="Nat. Rev. Immunol.">
        <title>Molecular programming of B cell memory.</title>
        <authorList>
            <person name="McHeyzer-Williams M."/>
            <person name="Okitsu S."/>
            <person name="Wang N."/>
            <person name="McHeyzer-Williams L."/>
        </authorList>
    </citation>
    <scope>REVIEW ON FUNCTION</scope>
</reference>
<reference key="7">
    <citation type="journal article" date="2014" name="Front. Immunol.">
        <title>Immunoglobulin and T Cell Receptor Genes: IMGT((R)) and the Birth and Rise of Immunoinformatics.</title>
        <authorList>
            <person name="Lefranc M.P."/>
        </authorList>
    </citation>
    <scope>NOMENCLATURE</scope>
</reference>
<name>LV322_HUMAN</name>
<gene>
    <name evidence="4 9" type="primary">IGLV3-22</name>
</gene>
<sequence length="115" mass="12549">MAWATLLLPLLNLYTGSVASYELTQLPSVSVSPGQTARITCSGDVLGENYADWYQQKPGQAPELVIYEDSERYPGIPERFSGSTSGNTTTLTISRVLTEDEADYYCLSGDEDNPS</sequence>